<reference key="1">
    <citation type="journal article" date="2008" name="Proc. Natl. Acad. Sci. U.S.A.">
        <title>The genome of Clostridium kluyveri, a strict anaerobe with unique metabolic features.</title>
        <authorList>
            <person name="Seedorf H."/>
            <person name="Fricke W.F."/>
            <person name="Veith B."/>
            <person name="Brueggemann H."/>
            <person name="Liesegang H."/>
            <person name="Strittmatter A."/>
            <person name="Miethke M."/>
            <person name="Buckel W."/>
            <person name="Hinderberger J."/>
            <person name="Li F."/>
            <person name="Hagemeier C."/>
            <person name="Thauer R.K."/>
            <person name="Gottschalk G."/>
        </authorList>
    </citation>
    <scope>NUCLEOTIDE SEQUENCE [LARGE SCALE GENOMIC DNA]</scope>
    <source>
        <strain>ATCC 8527 / DSM 555 / NBRC 12016 / NCIMB 10680 / K1</strain>
    </source>
</reference>
<keyword id="KW-0028">Amino-acid biosynthesis</keyword>
<keyword id="KW-0057">Aromatic amino acid biosynthesis</keyword>
<keyword id="KW-0413">Isomerase</keyword>
<keyword id="KW-1185">Reference proteome</keyword>
<keyword id="KW-0822">Tryptophan biosynthesis</keyword>
<sequence>MIKVKICGLKRDEDIKCVNRYKPDYVGFVFSKSKRQVNLEQAKMLIANLDSSIKSVGVFVDEALEYVYNTSKILALDVIQFHGLEDEEYMRHFNEFTIWKALKVRCREDILNLNYKYADGIVLDNKTAGSGKCFDWDIARHIKIKKDLILAGGINEENVETAAYIVNPDIVDVSSGVESQGYKDSSKIKMFIEKVRNIK</sequence>
<organism>
    <name type="scientific">Clostridium kluyveri (strain ATCC 8527 / DSM 555 / NBRC 12016 / NCIMB 10680 / K1)</name>
    <dbReference type="NCBI Taxonomy" id="431943"/>
    <lineage>
        <taxon>Bacteria</taxon>
        <taxon>Bacillati</taxon>
        <taxon>Bacillota</taxon>
        <taxon>Clostridia</taxon>
        <taxon>Eubacteriales</taxon>
        <taxon>Clostridiaceae</taxon>
        <taxon>Clostridium</taxon>
    </lineage>
</organism>
<gene>
    <name evidence="1" type="primary">trpF</name>
    <name type="ordered locus">CKL_1278</name>
</gene>
<protein>
    <recommendedName>
        <fullName evidence="1">N-(5'-phosphoribosyl)anthranilate isomerase</fullName>
        <shortName evidence="1">PRAI</shortName>
        <ecNumber evidence="1">5.3.1.24</ecNumber>
    </recommendedName>
</protein>
<comment type="catalytic activity">
    <reaction evidence="1">
        <text>N-(5-phospho-beta-D-ribosyl)anthranilate = 1-(2-carboxyphenylamino)-1-deoxy-D-ribulose 5-phosphate</text>
        <dbReference type="Rhea" id="RHEA:21540"/>
        <dbReference type="ChEBI" id="CHEBI:18277"/>
        <dbReference type="ChEBI" id="CHEBI:58613"/>
        <dbReference type="EC" id="5.3.1.24"/>
    </reaction>
</comment>
<comment type="pathway">
    <text evidence="1">Amino-acid biosynthesis; L-tryptophan biosynthesis; L-tryptophan from chorismate: step 3/5.</text>
</comment>
<comment type="similarity">
    <text evidence="1">Belongs to the TrpF family.</text>
</comment>
<accession>A5N7N9</accession>
<name>TRPF_CLOK5</name>
<proteinExistence type="inferred from homology"/>
<feature type="chain" id="PRO_1000076435" description="N-(5'-phosphoribosyl)anthranilate isomerase">
    <location>
        <begin position="1"/>
        <end position="199"/>
    </location>
</feature>
<evidence type="ECO:0000255" key="1">
    <source>
        <dbReference type="HAMAP-Rule" id="MF_00135"/>
    </source>
</evidence>
<dbReference type="EC" id="5.3.1.24" evidence="1"/>
<dbReference type="EMBL" id="CP000673">
    <property type="protein sequence ID" value="EDK33320.1"/>
    <property type="molecule type" value="Genomic_DNA"/>
</dbReference>
<dbReference type="RefSeq" id="WP_012101665.1">
    <property type="nucleotide sequence ID" value="NC_009706.1"/>
</dbReference>
<dbReference type="SMR" id="A5N7N9"/>
<dbReference type="STRING" id="431943.CKL_1278"/>
<dbReference type="KEGG" id="ckl:CKL_1278"/>
<dbReference type="eggNOG" id="COG0135">
    <property type="taxonomic scope" value="Bacteria"/>
</dbReference>
<dbReference type="HOGENOM" id="CLU_076364_1_0_9"/>
<dbReference type="UniPathway" id="UPA00035">
    <property type="reaction ID" value="UER00042"/>
</dbReference>
<dbReference type="Proteomes" id="UP000002411">
    <property type="component" value="Chromosome"/>
</dbReference>
<dbReference type="GO" id="GO:0004640">
    <property type="term" value="F:phosphoribosylanthranilate isomerase activity"/>
    <property type="evidence" value="ECO:0007669"/>
    <property type="project" value="UniProtKB-UniRule"/>
</dbReference>
<dbReference type="GO" id="GO:0000162">
    <property type="term" value="P:L-tryptophan biosynthetic process"/>
    <property type="evidence" value="ECO:0007669"/>
    <property type="project" value="UniProtKB-UniRule"/>
</dbReference>
<dbReference type="CDD" id="cd00405">
    <property type="entry name" value="PRAI"/>
    <property type="match status" value="1"/>
</dbReference>
<dbReference type="Gene3D" id="3.20.20.70">
    <property type="entry name" value="Aldolase class I"/>
    <property type="match status" value="1"/>
</dbReference>
<dbReference type="HAMAP" id="MF_00135">
    <property type="entry name" value="PRAI"/>
    <property type="match status" value="1"/>
</dbReference>
<dbReference type="InterPro" id="IPR013785">
    <property type="entry name" value="Aldolase_TIM"/>
</dbReference>
<dbReference type="InterPro" id="IPR001240">
    <property type="entry name" value="PRAI_dom"/>
</dbReference>
<dbReference type="InterPro" id="IPR011060">
    <property type="entry name" value="RibuloseP-bd_barrel"/>
</dbReference>
<dbReference type="InterPro" id="IPR044643">
    <property type="entry name" value="TrpF_fam"/>
</dbReference>
<dbReference type="PANTHER" id="PTHR42894">
    <property type="entry name" value="N-(5'-PHOSPHORIBOSYL)ANTHRANILATE ISOMERASE"/>
    <property type="match status" value="1"/>
</dbReference>
<dbReference type="PANTHER" id="PTHR42894:SF1">
    <property type="entry name" value="N-(5'-PHOSPHORIBOSYL)ANTHRANILATE ISOMERASE"/>
    <property type="match status" value="1"/>
</dbReference>
<dbReference type="Pfam" id="PF00697">
    <property type="entry name" value="PRAI"/>
    <property type="match status" value="1"/>
</dbReference>
<dbReference type="SUPFAM" id="SSF51366">
    <property type="entry name" value="Ribulose-phoshate binding barrel"/>
    <property type="match status" value="1"/>
</dbReference>